<gene>
    <name evidence="1" type="primary">atpA</name>
    <name type="ordered locus">SPC_3952</name>
</gene>
<evidence type="ECO:0000255" key="1">
    <source>
        <dbReference type="HAMAP-Rule" id="MF_01346"/>
    </source>
</evidence>
<name>ATPA_SALPC</name>
<sequence>MQLNSTEISELIKQRIAQFNVVSEAHNEGTIVSVSDGVIRIHGLADCMQGEMISLPGNRYAIALNLERDSVGAVVMGPYADLAEGMKVKCTGRILEVPVGRGLLGRVVNTLGAPIDGKGPVDNDGFSAVEAIAPGVIDRQSVDQPVQTGYKAVDSMIPIGRGQRELIIGDRQTGKTALAIDAIINQRDSGIKCIYVAIGQKASTISNVVRKLEEHGALANTIVVVATASESAALQYLAPYAGCAMGEYFRDRGEDALIIYDDLSKQAVAYRQISLLLRRPPGREAFPGDVFYLHSRLLERAARVNADYVEAFTKGEVKGRTGSLTALPIIETQAGDVSAFVPTNVISITDGQIFLESNLFNAGIRPAVNPGISVSRVGGAAQTKIMKKLSGGIRTALAQYRELAAFSQFASDLDDATRKQLDHGQKVTELLKQKQYAPMSVAQQSLVLFAAERGYLADVELAKIGSFEAALLAYVDRDHAPLMQEINQSGGYNDEIEGKLKGILDSFKATQSW</sequence>
<feature type="chain" id="PRO_1000166553" description="ATP synthase subunit alpha">
    <location>
        <begin position="1"/>
        <end position="513"/>
    </location>
</feature>
<feature type="binding site" evidence="1">
    <location>
        <begin position="169"/>
        <end position="176"/>
    </location>
    <ligand>
        <name>ATP</name>
        <dbReference type="ChEBI" id="CHEBI:30616"/>
    </ligand>
</feature>
<feature type="site" description="Required for activity" evidence="1">
    <location>
        <position position="373"/>
    </location>
</feature>
<dbReference type="EC" id="7.1.2.2" evidence="1"/>
<dbReference type="EMBL" id="CP000857">
    <property type="protein sequence ID" value="ACN48020.1"/>
    <property type="molecule type" value="Genomic_DNA"/>
</dbReference>
<dbReference type="RefSeq" id="WP_001176753.1">
    <property type="nucleotide sequence ID" value="NC_012125.1"/>
</dbReference>
<dbReference type="SMR" id="C0Q2N4"/>
<dbReference type="KEGG" id="sei:SPC_3952"/>
<dbReference type="HOGENOM" id="CLU_010091_2_1_6"/>
<dbReference type="Proteomes" id="UP000001599">
    <property type="component" value="Chromosome"/>
</dbReference>
<dbReference type="GO" id="GO:0005886">
    <property type="term" value="C:plasma membrane"/>
    <property type="evidence" value="ECO:0007669"/>
    <property type="project" value="UniProtKB-SubCell"/>
</dbReference>
<dbReference type="GO" id="GO:0045259">
    <property type="term" value="C:proton-transporting ATP synthase complex"/>
    <property type="evidence" value="ECO:0007669"/>
    <property type="project" value="UniProtKB-KW"/>
</dbReference>
<dbReference type="GO" id="GO:0043531">
    <property type="term" value="F:ADP binding"/>
    <property type="evidence" value="ECO:0007669"/>
    <property type="project" value="TreeGrafter"/>
</dbReference>
<dbReference type="GO" id="GO:0005524">
    <property type="term" value="F:ATP binding"/>
    <property type="evidence" value="ECO:0007669"/>
    <property type="project" value="UniProtKB-UniRule"/>
</dbReference>
<dbReference type="GO" id="GO:0046933">
    <property type="term" value="F:proton-transporting ATP synthase activity, rotational mechanism"/>
    <property type="evidence" value="ECO:0007669"/>
    <property type="project" value="UniProtKB-UniRule"/>
</dbReference>
<dbReference type="CDD" id="cd18113">
    <property type="entry name" value="ATP-synt_F1_alpha_C"/>
    <property type="match status" value="1"/>
</dbReference>
<dbReference type="CDD" id="cd18116">
    <property type="entry name" value="ATP-synt_F1_alpha_N"/>
    <property type="match status" value="1"/>
</dbReference>
<dbReference type="CDD" id="cd01132">
    <property type="entry name" value="F1-ATPase_alpha_CD"/>
    <property type="match status" value="1"/>
</dbReference>
<dbReference type="FunFam" id="1.20.150.20:FF:000001">
    <property type="entry name" value="ATP synthase subunit alpha"/>
    <property type="match status" value="1"/>
</dbReference>
<dbReference type="FunFam" id="2.40.30.20:FF:000001">
    <property type="entry name" value="ATP synthase subunit alpha"/>
    <property type="match status" value="1"/>
</dbReference>
<dbReference type="FunFam" id="3.40.50.300:FF:000002">
    <property type="entry name" value="ATP synthase subunit alpha"/>
    <property type="match status" value="1"/>
</dbReference>
<dbReference type="Gene3D" id="2.40.30.20">
    <property type="match status" value="1"/>
</dbReference>
<dbReference type="Gene3D" id="1.20.150.20">
    <property type="entry name" value="ATP synthase alpha/beta chain, C-terminal domain"/>
    <property type="match status" value="1"/>
</dbReference>
<dbReference type="Gene3D" id="3.40.50.300">
    <property type="entry name" value="P-loop containing nucleotide triphosphate hydrolases"/>
    <property type="match status" value="1"/>
</dbReference>
<dbReference type="HAMAP" id="MF_01346">
    <property type="entry name" value="ATP_synth_alpha_bact"/>
    <property type="match status" value="1"/>
</dbReference>
<dbReference type="InterPro" id="IPR023366">
    <property type="entry name" value="ATP_synth_asu-like_sf"/>
</dbReference>
<dbReference type="InterPro" id="IPR000793">
    <property type="entry name" value="ATP_synth_asu_C"/>
</dbReference>
<dbReference type="InterPro" id="IPR038376">
    <property type="entry name" value="ATP_synth_asu_C_sf"/>
</dbReference>
<dbReference type="InterPro" id="IPR033732">
    <property type="entry name" value="ATP_synth_F1_a_nt-bd_dom"/>
</dbReference>
<dbReference type="InterPro" id="IPR005294">
    <property type="entry name" value="ATP_synth_F1_asu"/>
</dbReference>
<dbReference type="InterPro" id="IPR020003">
    <property type="entry name" value="ATPase_a/bsu_AS"/>
</dbReference>
<dbReference type="InterPro" id="IPR004100">
    <property type="entry name" value="ATPase_F1/V1/A1_a/bsu_N"/>
</dbReference>
<dbReference type="InterPro" id="IPR036121">
    <property type="entry name" value="ATPase_F1/V1/A1_a/bsu_N_sf"/>
</dbReference>
<dbReference type="InterPro" id="IPR000194">
    <property type="entry name" value="ATPase_F1/V1/A1_a/bsu_nucl-bd"/>
</dbReference>
<dbReference type="InterPro" id="IPR027417">
    <property type="entry name" value="P-loop_NTPase"/>
</dbReference>
<dbReference type="NCBIfam" id="TIGR00962">
    <property type="entry name" value="atpA"/>
    <property type="match status" value="1"/>
</dbReference>
<dbReference type="NCBIfam" id="NF009884">
    <property type="entry name" value="PRK13343.1"/>
    <property type="match status" value="1"/>
</dbReference>
<dbReference type="PANTHER" id="PTHR48082">
    <property type="entry name" value="ATP SYNTHASE SUBUNIT ALPHA, MITOCHONDRIAL"/>
    <property type="match status" value="1"/>
</dbReference>
<dbReference type="PANTHER" id="PTHR48082:SF2">
    <property type="entry name" value="ATP SYNTHASE SUBUNIT ALPHA, MITOCHONDRIAL"/>
    <property type="match status" value="1"/>
</dbReference>
<dbReference type="Pfam" id="PF00006">
    <property type="entry name" value="ATP-synt_ab"/>
    <property type="match status" value="1"/>
</dbReference>
<dbReference type="Pfam" id="PF00306">
    <property type="entry name" value="ATP-synt_ab_C"/>
    <property type="match status" value="1"/>
</dbReference>
<dbReference type="Pfam" id="PF02874">
    <property type="entry name" value="ATP-synt_ab_N"/>
    <property type="match status" value="1"/>
</dbReference>
<dbReference type="SUPFAM" id="SSF47917">
    <property type="entry name" value="C-terminal domain of alpha and beta subunits of F1 ATP synthase"/>
    <property type="match status" value="1"/>
</dbReference>
<dbReference type="SUPFAM" id="SSF50615">
    <property type="entry name" value="N-terminal domain of alpha and beta subunits of F1 ATP synthase"/>
    <property type="match status" value="1"/>
</dbReference>
<dbReference type="SUPFAM" id="SSF52540">
    <property type="entry name" value="P-loop containing nucleoside triphosphate hydrolases"/>
    <property type="match status" value="1"/>
</dbReference>
<dbReference type="PROSITE" id="PS00152">
    <property type="entry name" value="ATPASE_ALPHA_BETA"/>
    <property type="match status" value="1"/>
</dbReference>
<keyword id="KW-0066">ATP synthesis</keyword>
<keyword id="KW-0067">ATP-binding</keyword>
<keyword id="KW-0997">Cell inner membrane</keyword>
<keyword id="KW-1003">Cell membrane</keyword>
<keyword id="KW-0139">CF(1)</keyword>
<keyword id="KW-0375">Hydrogen ion transport</keyword>
<keyword id="KW-0406">Ion transport</keyword>
<keyword id="KW-0472">Membrane</keyword>
<keyword id="KW-0547">Nucleotide-binding</keyword>
<keyword id="KW-1278">Translocase</keyword>
<keyword id="KW-0813">Transport</keyword>
<accession>C0Q2N4</accession>
<comment type="function">
    <text evidence="1">Produces ATP from ADP in the presence of a proton gradient across the membrane. The alpha chain is a regulatory subunit.</text>
</comment>
<comment type="catalytic activity">
    <reaction evidence="1">
        <text>ATP + H2O + 4 H(+)(in) = ADP + phosphate + 5 H(+)(out)</text>
        <dbReference type="Rhea" id="RHEA:57720"/>
        <dbReference type="ChEBI" id="CHEBI:15377"/>
        <dbReference type="ChEBI" id="CHEBI:15378"/>
        <dbReference type="ChEBI" id="CHEBI:30616"/>
        <dbReference type="ChEBI" id="CHEBI:43474"/>
        <dbReference type="ChEBI" id="CHEBI:456216"/>
        <dbReference type="EC" id="7.1.2.2"/>
    </reaction>
</comment>
<comment type="subunit">
    <text evidence="1">F-type ATPases have 2 components, CF(1) - the catalytic core - and CF(0) - the membrane proton channel. CF(1) has five subunits: alpha(3), beta(3), gamma(1), delta(1), epsilon(1). CF(0) has three main subunits: a(1), b(2) and c(9-12). The alpha and beta chains form an alternating ring which encloses part of the gamma chain. CF(1) is attached to CF(0) by a central stalk formed by the gamma and epsilon chains, while a peripheral stalk is formed by the delta and b chains.</text>
</comment>
<comment type="subcellular location">
    <subcellularLocation>
        <location evidence="1">Cell inner membrane</location>
        <topology evidence="1">Peripheral membrane protein</topology>
    </subcellularLocation>
</comment>
<comment type="similarity">
    <text evidence="1">Belongs to the ATPase alpha/beta chains family.</text>
</comment>
<proteinExistence type="inferred from homology"/>
<reference key="1">
    <citation type="journal article" date="2009" name="PLoS ONE">
        <title>Salmonella paratyphi C: genetic divergence from Salmonella choleraesuis and pathogenic convergence with Salmonella typhi.</title>
        <authorList>
            <person name="Liu W.-Q."/>
            <person name="Feng Y."/>
            <person name="Wang Y."/>
            <person name="Zou Q.-H."/>
            <person name="Chen F."/>
            <person name="Guo J.-T."/>
            <person name="Peng Y.-H."/>
            <person name="Jin Y."/>
            <person name="Li Y.-G."/>
            <person name="Hu S.-N."/>
            <person name="Johnston R.N."/>
            <person name="Liu G.-R."/>
            <person name="Liu S.-L."/>
        </authorList>
    </citation>
    <scope>NUCLEOTIDE SEQUENCE [LARGE SCALE GENOMIC DNA]</scope>
    <source>
        <strain>RKS4594</strain>
    </source>
</reference>
<protein>
    <recommendedName>
        <fullName evidence="1">ATP synthase subunit alpha</fullName>
        <ecNumber evidence="1">7.1.2.2</ecNumber>
    </recommendedName>
    <alternativeName>
        <fullName evidence="1">ATP synthase F1 sector subunit alpha</fullName>
    </alternativeName>
    <alternativeName>
        <fullName evidence="1">F-ATPase subunit alpha</fullName>
    </alternativeName>
</protein>
<organism>
    <name type="scientific">Salmonella paratyphi C (strain RKS4594)</name>
    <dbReference type="NCBI Taxonomy" id="476213"/>
    <lineage>
        <taxon>Bacteria</taxon>
        <taxon>Pseudomonadati</taxon>
        <taxon>Pseudomonadota</taxon>
        <taxon>Gammaproteobacteria</taxon>
        <taxon>Enterobacterales</taxon>
        <taxon>Enterobacteriaceae</taxon>
        <taxon>Salmonella</taxon>
    </lineage>
</organism>